<gene>
    <name evidence="1" type="primary">NEC1</name>
    <name type="synonym">UL31</name>
</gene>
<comment type="function">
    <text evidence="1">Plays an essential role in virion nuclear egress, the first step of virion release from infected cell. Within the host nucleus, NEC1 interacts with the newly formed capsid through the vertexes and directs it to the inner nuclear membrane by associating with NEC2. Induces the budding of the capsid at the inner nuclear membrane as well as its envelopment into the perinuclear space. There, the NEC1/NEC2 complex promotes the fusion of the enveloped capsid with the outer nuclear membrane and the subsequent release of the viral capsid into the cytoplasm where it will reach the secondary budding sites in the host Golgi or trans-Golgi network.</text>
</comment>
<comment type="subunit">
    <text evidence="1">Forms a heterohexameric complex with NEC2. Interacts with capsid vertex specific component 2/CVC2; this interaction directs the capsid to the host inner nuclear membrane to initiate budding.</text>
</comment>
<comment type="subcellular location">
    <subcellularLocation>
        <location evidence="1 3 4">Host nucleus inner membrane</location>
    </subcellularLocation>
    <text evidence="1">Remains attached to the nucleus inner membrane through interaction with NEC2.</text>
</comment>
<comment type="PTM">
    <text evidence="1">Phosphorylated at serine residues in the N-terminus. This phosphorylation regulates the localization within the inner nuclear membrane.</text>
</comment>
<comment type="similarity">
    <text evidence="1">Belongs to the herpesviridae NEC1 protein family.</text>
</comment>
<proteinExistence type="inferred from homology"/>
<evidence type="ECO:0000255" key="1">
    <source>
        <dbReference type="HAMAP-Rule" id="MF_04023"/>
    </source>
</evidence>
<evidence type="ECO:0000256" key="2">
    <source>
        <dbReference type="SAM" id="MobiDB-lite"/>
    </source>
</evidence>
<evidence type="ECO:0000269" key="3">
    <source>
    </source>
</evidence>
<evidence type="ECO:0000269" key="4">
    <source>
    </source>
</evidence>
<organism>
    <name type="scientific">Human herpesvirus 2 (strain HG52)</name>
    <name type="common">HHV-2</name>
    <name type="synonym">Human herpes simplex virus 2</name>
    <dbReference type="NCBI Taxonomy" id="10315"/>
    <lineage>
        <taxon>Viruses</taxon>
        <taxon>Duplodnaviria</taxon>
        <taxon>Heunggongvirae</taxon>
        <taxon>Peploviricota</taxon>
        <taxon>Herviviricetes</taxon>
        <taxon>Herpesvirales</taxon>
        <taxon>Orthoherpesviridae</taxon>
        <taxon>Alphaherpesvirinae</taxon>
        <taxon>Simplexvirus</taxon>
        <taxon>Simplexvirus humanalpha2</taxon>
        <taxon>Human herpesvirus 2</taxon>
    </lineage>
</organism>
<keyword id="KW-1043">Host membrane</keyword>
<keyword id="KW-1048">Host nucleus</keyword>
<keyword id="KW-0472">Membrane</keyword>
<keyword id="KW-0479">Metal-binding</keyword>
<keyword id="KW-0597">Phosphoprotein</keyword>
<keyword id="KW-1185">Reference proteome</keyword>
<keyword id="KW-0862">Zinc</keyword>
<keyword id="KW-0863">Zinc-finger</keyword>
<reference key="1">
    <citation type="journal article" date="1991" name="J. Gen. Virol.">
        <title>Comparative sequence analysis of the long repeat regions and adjoining parts of the long unique regions in the genomes of herpes simplex viruses types 1 and 2.</title>
        <authorList>
            <person name="McGeoch D.J."/>
            <person name="Cunningham C."/>
            <person name="McIntyre G."/>
            <person name="Dolan A."/>
        </authorList>
    </citation>
    <scope>NUCLEOTIDE SEQUENCE [LARGE SCALE GENOMIC DNA]</scope>
</reference>
<reference key="2">
    <citation type="journal article" date="1999" name="Arch. Virol.">
        <title>Intracellular localization of the UL31 protein of herpes simplex virus type 2.</title>
        <authorList>
            <person name="Zhu H.Y."/>
            <person name="Yamada H."/>
            <person name="Jiang Y.M."/>
            <person name="Yamada M."/>
            <person name="Nishiyama Y."/>
        </authorList>
    </citation>
    <scope>SUBCELLULAR LOCATION</scope>
</reference>
<reference key="3">
    <citation type="journal article" date="2001" name="J. Gen. Virol.">
        <title>Herpes simplex virus type 2 UL34 protein requires UL31 protein for its relocation to the internal nuclear membrane in transfected cells.</title>
        <authorList>
            <person name="Yamauchi Y."/>
            <person name="Shiba C."/>
            <person name="Goshima F."/>
            <person name="Nawa A."/>
            <person name="Murata T."/>
            <person name="Nishiyama Y."/>
        </authorList>
    </citation>
    <scope>SUBCELLULAR LOCATION</scope>
</reference>
<dbReference type="EMBL" id="Z86099">
    <property type="protein sequence ID" value="CAB06756.1"/>
    <property type="molecule type" value="Genomic_DNA"/>
</dbReference>
<dbReference type="RefSeq" id="YP_009137183.1">
    <property type="nucleotide sequence ID" value="NC_001798.2"/>
</dbReference>
<dbReference type="SMR" id="P89454"/>
<dbReference type="DNASU" id="1487317"/>
<dbReference type="GeneID" id="1487317"/>
<dbReference type="KEGG" id="vg:1487317"/>
<dbReference type="Proteomes" id="UP000001874">
    <property type="component" value="Segment"/>
</dbReference>
<dbReference type="GO" id="GO:0044201">
    <property type="term" value="C:host cell nuclear inner membrane"/>
    <property type="evidence" value="ECO:0007669"/>
    <property type="project" value="UniProtKB-SubCell"/>
</dbReference>
<dbReference type="GO" id="GO:0016020">
    <property type="term" value="C:membrane"/>
    <property type="evidence" value="ECO:0007669"/>
    <property type="project" value="UniProtKB-KW"/>
</dbReference>
<dbReference type="GO" id="GO:0008270">
    <property type="term" value="F:zinc ion binding"/>
    <property type="evidence" value="ECO:0007669"/>
    <property type="project" value="UniProtKB-KW"/>
</dbReference>
<dbReference type="GO" id="GO:0046765">
    <property type="term" value="P:viral budding from nuclear membrane"/>
    <property type="evidence" value="ECO:0000314"/>
    <property type="project" value="UniProtKB"/>
</dbReference>
<dbReference type="HAMAP" id="MF_04023">
    <property type="entry name" value="HSV_NEC1"/>
    <property type="match status" value="1"/>
</dbReference>
<dbReference type="InterPro" id="IPR021152">
    <property type="entry name" value="Herpes_UL31"/>
</dbReference>
<dbReference type="Pfam" id="PF02718">
    <property type="entry name" value="Herpes_UL31"/>
    <property type="match status" value="1"/>
</dbReference>
<accession>P89454</accession>
<sequence>MYDIAPRRSGSRPGPGRDKTRRRSRFSAAGNPGVERRASRKSLPSHARRLELCLHERRRYRGFFAALAQTPSEEIAIVRSLSVPLVKTTPVSLPFSLDQTVADNCLTLSGMGYYLGIGGCCPACSAGDGRLATVSREALILAFVQQINTIFEHRTFLASLVVLADRHSTPLQDLLADTLGQPELFFVHTILRGGGACDPRFLFYPDPTYGGHMLYVIFPGTSAHLHYRLIDRMLTACPGYRFAAHVWQSTFVLVVRRNAEKPADAEIPTVSAADIYCKMRDISFDGGLMLEYQRLYATFDEFPPP</sequence>
<protein>
    <recommendedName>
        <fullName evidence="1">Nuclear egress protein 1</fullName>
    </recommendedName>
</protein>
<feature type="chain" id="PRO_0000406179" description="Nuclear egress protein 1">
    <location>
        <begin position="1"/>
        <end position="305"/>
    </location>
</feature>
<feature type="zinc finger region" description="CCCH-type" evidence="1">
    <location>
        <begin position="105"/>
        <end position="224"/>
    </location>
</feature>
<feature type="region of interest" description="Disordered" evidence="2">
    <location>
        <begin position="1"/>
        <end position="42"/>
    </location>
</feature>
<organismHost>
    <name type="scientific">Homo sapiens</name>
    <name type="common">Human</name>
    <dbReference type="NCBI Taxonomy" id="9606"/>
</organismHost>
<name>NEC1_HHV2H</name>